<organism>
    <name type="scientific">Picrophilus torridus (strain ATCC 700027 / DSM 9790 / JCM 10055 / NBRC 100828 / KAW 2/3)</name>
    <dbReference type="NCBI Taxonomy" id="1122961"/>
    <lineage>
        <taxon>Archaea</taxon>
        <taxon>Methanobacteriati</taxon>
        <taxon>Thermoplasmatota</taxon>
        <taxon>Thermoplasmata</taxon>
        <taxon>Thermoplasmatales</taxon>
        <taxon>Picrophilaceae</taxon>
        <taxon>Picrophilus</taxon>
    </lineage>
</organism>
<gene>
    <name evidence="1" type="primary">rpl31e</name>
    <name type="ordered locus">PTO0206</name>
</gene>
<comment type="similarity">
    <text evidence="1">Belongs to the eukaryotic ribosomal protein eL31 family.</text>
</comment>
<accession>Q6L2L1</accession>
<keyword id="KW-0687">Ribonucleoprotein</keyword>
<keyword id="KW-0689">Ribosomal protein</keyword>
<protein>
    <recommendedName>
        <fullName evidence="1">Large ribosomal subunit protein eL31</fullName>
    </recommendedName>
    <alternativeName>
        <fullName evidence="2">50S ribosomal protein L31e</fullName>
    </alternativeName>
</protein>
<reference key="1">
    <citation type="journal article" date="2004" name="Proc. Natl. Acad. Sci. U.S.A.">
        <title>Genome sequence of Picrophilus torridus and its implications for life around pH 0.</title>
        <authorList>
            <person name="Fuetterer O."/>
            <person name="Angelov A."/>
            <person name="Liesegang H."/>
            <person name="Gottschalk G."/>
            <person name="Schleper C."/>
            <person name="Schepers B."/>
            <person name="Dock C."/>
            <person name="Antranikian G."/>
            <person name="Liebl W."/>
        </authorList>
    </citation>
    <scope>NUCLEOTIDE SEQUENCE [LARGE SCALE GENOMIC DNA]</scope>
    <source>
        <strain>ATCC 700027 / DSM 9790 / JCM 10055 / NBRC 100828 / KAW 2/3</strain>
    </source>
</reference>
<feature type="chain" id="PRO_0000153799" description="Large ribosomal subunit protein eL31">
    <location>
        <begin position="1"/>
        <end position="89"/>
    </location>
</feature>
<dbReference type="EMBL" id="AE017261">
    <property type="protein sequence ID" value="AAT42791.1"/>
    <property type="molecule type" value="Genomic_DNA"/>
</dbReference>
<dbReference type="RefSeq" id="WP_011177007.1">
    <property type="nucleotide sequence ID" value="NC_005877.1"/>
</dbReference>
<dbReference type="SMR" id="Q6L2L1"/>
<dbReference type="STRING" id="263820.PTO0206"/>
<dbReference type="PaxDb" id="263820-PTO0206"/>
<dbReference type="GeneID" id="2843995"/>
<dbReference type="KEGG" id="pto:PTO0206"/>
<dbReference type="eggNOG" id="arCOG04473">
    <property type="taxonomic scope" value="Archaea"/>
</dbReference>
<dbReference type="HOGENOM" id="CLU_112570_3_2_2"/>
<dbReference type="InParanoid" id="Q6L2L1"/>
<dbReference type="OrthoDB" id="10127at2157"/>
<dbReference type="Proteomes" id="UP000000438">
    <property type="component" value="Chromosome"/>
</dbReference>
<dbReference type="GO" id="GO:1990904">
    <property type="term" value="C:ribonucleoprotein complex"/>
    <property type="evidence" value="ECO:0007669"/>
    <property type="project" value="UniProtKB-KW"/>
</dbReference>
<dbReference type="GO" id="GO:0005840">
    <property type="term" value="C:ribosome"/>
    <property type="evidence" value="ECO:0007669"/>
    <property type="project" value="UniProtKB-KW"/>
</dbReference>
<dbReference type="GO" id="GO:0003735">
    <property type="term" value="F:structural constituent of ribosome"/>
    <property type="evidence" value="ECO:0007669"/>
    <property type="project" value="InterPro"/>
</dbReference>
<dbReference type="GO" id="GO:0006412">
    <property type="term" value="P:translation"/>
    <property type="evidence" value="ECO:0007669"/>
    <property type="project" value="UniProtKB-UniRule"/>
</dbReference>
<dbReference type="CDD" id="cd00463">
    <property type="entry name" value="Ribosomal_L31e"/>
    <property type="match status" value="1"/>
</dbReference>
<dbReference type="Gene3D" id="3.10.440.10">
    <property type="match status" value="1"/>
</dbReference>
<dbReference type="HAMAP" id="MF_00410">
    <property type="entry name" value="Ribosomal_eL31"/>
    <property type="match status" value="1"/>
</dbReference>
<dbReference type="InterPro" id="IPR000054">
    <property type="entry name" value="Ribosomal_eL31"/>
</dbReference>
<dbReference type="InterPro" id="IPR020052">
    <property type="entry name" value="Ribosomal_eL31_CS"/>
</dbReference>
<dbReference type="InterPro" id="IPR023621">
    <property type="entry name" value="Ribosomal_eL31_dom_sf"/>
</dbReference>
<dbReference type="NCBIfam" id="NF002258">
    <property type="entry name" value="PRK01192.1-1"/>
    <property type="match status" value="1"/>
</dbReference>
<dbReference type="Pfam" id="PF01198">
    <property type="entry name" value="Ribosomal_L31e"/>
    <property type="match status" value="1"/>
</dbReference>
<dbReference type="SMART" id="SM01380">
    <property type="entry name" value="Ribosomal_L31e"/>
    <property type="match status" value="1"/>
</dbReference>
<dbReference type="SUPFAM" id="SSF54575">
    <property type="entry name" value="Ribosomal protein L31e"/>
    <property type="match status" value="1"/>
</dbReference>
<dbReference type="PROSITE" id="PS01144">
    <property type="entry name" value="RIBOSOMAL_L31E"/>
    <property type="match status" value="1"/>
</dbReference>
<proteinExistence type="inferred from homology"/>
<name>RL31_PICTO</name>
<sequence length="89" mass="10317">MADEENTTEILLSVSLRKARFSSKSRRADTSIKMLKDAVARYTKSDRDRIWVDNKVNELIWSRGRRKVPTRVNIKVIKLEDGTSEIILP</sequence>
<evidence type="ECO:0000255" key="1">
    <source>
        <dbReference type="HAMAP-Rule" id="MF_00410"/>
    </source>
</evidence>
<evidence type="ECO:0000305" key="2"/>